<evidence type="ECO:0000250" key="1">
    <source>
        <dbReference type="UniProtKB" id="P28007"/>
    </source>
</evidence>
<evidence type="ECO:0000256" key="2">
    <source>
        <dbReference type="SAM" id="MobiDB-lite"/>
    </source>
</evidence>
<evidence type="ECO:0000305" key="3"/>
<accession>A1CVY3</accession>
<keyword id="KW-0539">Nucleus</keyword>
<keyword id="KW-1185">Reference proteome</keyword>
<keyword id="KW-0677">Repeat</keyword>
<keyword id="KW-0687">Ribonucleoprotein</keyword>
<keyword id="KW-0690">Ribosome biogenesis</keyword>
<keyword id="KW-0694">RNA-binding</keyword>
<keyword id="KW-0698">rRNA processing</keyword>
<protein>
    <recommendedName>
        <fullName>H/ACA ribonucleoprotein complex subunit gar1</fullName>
    </recommendedName>
    <alternativeName>
        <fullName>snoRNP protein GAR1</fullName>
    </alternativeName>
</protein>
<comment type="function">
    <text evidence="1">Non-catalytic component of the H/ACA small nucleolar ribonucleoprotein (H/ACA snoRNP), which catalyzes pseudouridylation of rRNA and is required for ribosome biogenesis. This involves the isomerization of uridine such that the ribose is subsequently attached to C5, instead of the normal N1. Pseudouridine ('psi') residues may serve to stabilize the conformation of rRNAs. The H/ACA snoRNP complex also mediates pseudouridylation of other types of RNAs. The H/ACA snoRNP complex mediates pseudouridylation at position 93 in U2 snRNA.</text>
</comment>
<comment type="subunit">
    <text evidence="1">Component of the small nucleolar ribonucleoprotein particles containing H/ACA-type snoRNAs (H/ACA snoRNPs).</text>
</comment>
<comment type="subcellular location">
    <subcellularLocation>
        <location evidence="1">Nucleus</location>
        <location evidence="1">Nucleolus</location>
    </subcellularLocation>
</comment>
<comment type="similarity">
    <text evidence="3">Belongs to the GAR1 family.</text>
</comment>
<proteinExistence type="inferred from homology"/>
<name>GAR1_NEOFI</name>
<dbReference type="EMBL" id="DS027685">
    <property type="protein sequence ID" value="EAW24785.1"/>
    <property type="molecule type" value="Genomic_DNA"/>
</dbReference>
<dbReference type="RefSeq" id="XP_001266682.1">
    <property type="nucleotide sequence ID" value="XM_001266681.1"/>
</dbReference>
<dbReference type="SMR" id="A1CVY3"/>
<dbReference type="STRING" id="331117.A1CVY3"/>
<dbReference type="EnsemblFungi" id="EAW24785">
    <property type="protein sequence ID" value="EAW24785"/>
    <property type="gene ID" value="NFIA_102700"/>
</dbReference>
<dbReference type="GeneID" id="4594071"/>
<dbReference type="KEGG" id="nfi:NFIA_102700"/>
<dbReference type="VEuPathDB" id="FungiDB:NFIA_102700"/>
<dbReference type="eggNOG" id="KOG3262">
    <property type="taxonomic scope" value="Eukaryota"/>
</dbReference>
<dbReference type="HOGENOM" id="CLU_080002_1_0_1"/>
<dbReference type="OMA" id="KPQDGIV"/>
<dbReference type="OrthoDB" id="2187159at2759"/>
<dbReference type="Proteomes" id="UP000006702">
    <property type="component" value="Unassembled WGS sequence"/>
</dbReference>
<dbReference type="GO" id="GO:0031429">
    <property type="term" value="C:box H/ACA snoRNP complex"/>
    <property type="evidence" value="ECO:0007669"/>
    <property type="project" value="TreeGrafter"/>
</dbReference>
<dbReference type="GO" id="GO:0034513">
    <property type="term" value="F:box H/ACA snoRNA binding"/>
    <property type="evidence" value="ECO:0007669"/>
    <property type="project" value="TreeGrafter"/>
</dbReference>
<dbReference type="GO" id="GO:0000454">
    <property type="term" value="P:snoRNA guided rRNA pseudouridine synthesis"/>
    <property type="evidence" value="ECO:0007669"/>
    <property type="project" value="TreeGrafter"/>
</dbReference>
<dbReference type="FunFam" id="2.40.10.230:FF:000001">
    <property type="entry name" value="H/ACA ribonucleoprotein complex subunit"/>
    <property type="match status" value="1"/>
</dbReference>
<dbReference type="Gene3D" id="2.40.10.230">
    <property type="entry name" value="Probable tRNA pseudouridine synthase domain"/>
    <property type="match status" value="1"/>
</dbReference>
<dbReference type="InterPro" id="IPR038664">
    <property type="entry name" value="Gar1/Naf1_Cbf5-bd_sf"/>
</dbReference>
<dbReference type="InterPro" id="IPR007504">
    <property type="entry name" value="H/ACA_rnp_Gar1/Naf1"/>
</dbReference>
<dbReference type="InterPro" id="IPR009000">
    <property type="entry name" value="Transl_B-barrel_sf"/>
</dbReference>
<dbReference type="PANTHER" id="PTHR23237:SF6">
    <property type="entry name" value="H_ACA RIBONUCLEOPROTEIN COMPLEX SUBUNIT 1"/>
    <property type="match status" value="1"/>
</dbReference>
<dbReference type="PANTHER" id="PTHR23237">
    <property type="entry name" value="NUCLEOLAR PROTEIN FAMILY A MEMBER 1 SNORNP PROTEIN GAR1"/>
    <property type="match status" value="1"/>
</dbReference>
<dbReference type="Pfam" id="PF04410">
    <property type="entry name" value="Gar1"/>
    <property type="match status" value="1"/>
</dbReference>
<dbReference type="SUPFAM" id="SSF50447">
    <property type="entry name" value="Translation proteins"/>
    <property type="match status" value="1"/>
</dbReference>
<reference key="1">
    <citation type="journal article" date="2008" name="PLoS Genet.">
        <title>Genomic islands in the pathogenic filamentous fungus Aspergillus fumigatus.</title>
        <authorList>
            <person name="Fedorova N.D."/>
            <person name="Khaldi N."/>
            <person name="Joardar V.S."/>
            <person name="Maiti R."/>
            <person name="Amedeo P."/>
            <person name="Anderson M.J."/>
            <person name="Crabtree J."/>
            <person name="Silva J.C."/>
            <person name="Badger J.H."/>
            <person name="Albarraq A."/>
            <person name="Angiuoli S."/>
            <person name="Bussey H."/>
            <person name="Bowyer P."/>
            <person name="Cotty P.J."/>
            <person name="Dyer P.S."/>
            <person name="Egan A."/>
            <person name="Galens K."/>
            <person name="Fraser-Liggett C.M."/>
            <person name="Haas B.J."/>
            <person name="Inman J.M."/>
            <person name="Kent R."/>
            <person name="Lemieux S."/>
            <person name="Malavazi I."/>
            <person name="Orvis J."/>
            <person name="Roemer T."/>
            <person name="Ronning C.M."/>
            <person name="Sundaram J.P."/>
            <person name="Sutton G."/>
            <person name="Turner G."/>
            <person name="Venter J.C."/>
            <person name="White O.R."/>
            <person name="Whitty B.R."/>
            <person name="Youngman P."/>
            <person name="Wolfe K.H."/>
            <person name="Goldman G.H."/>
            <person name="Wortman J.R."/>
            <person name="Jiang B."/>
            <person name="Denning D.W."/>
            <person name="Nierman W.C."/>
        </authorList>
    </citation>
    <scope>NUCLEOTIDE SEQUENCE [LARGE SCALE GENOMIC DNA]</scope>
    <source>
        <strain>ATCC 1020 / DSM 3700 / CBS 544.65 / FGSC A1164 / JCM 1740 / NRRL 181 / WB 181</strain>
    </source>
</reference>
<sequence length="209" mass="21047">MSFRGGGRGGFASGANRGGNFGGRGGRGGFQAQTGPPAQVLEMGTFMHACEGEMVCESVNPKIPYFNAPIYLENKTPIGKVDEVLGPINQVYFTIKPQEGIVATSFKPGDKVYIGGDKLLPLEKFLPKPKPPPGSKPKKAVGGRGGFARGGARGGRGAPRGGRGGAPRGRGGPRGGGFGGGSFGGGGFRGGSRGGGRGGPRGGSGGFRR</sequence>
<feature type="chain" id="PRO_0000327530" description="H/ACA ribonucleoprotein complex subunit gar1">
    <location>
        <begin position="1"/>
        <end position="209"/>
    </location>
</feature>
<feature type="region of interest" description="Disordered" evidence="2">
    <location>
        <begin position="1"/>
        <end position="36"/>
    </location>
</feature>
<feature type="region of interest" description="RGG-box 1">
    <location>
        <begin position="4"/>
        <end position="29"/>
    </location>
</feature>
<feature type="region of interest" description="Disordered" evidence="2">
    <location>
        <begin position="125"/>
        <end position="209"/>
    </location>
</feature>
<feature type="region of interest" description="RGG-box 2">
    <location>
        <begin position="144"/>
        <end position="203"/>
    </location>
</feature>
<feature type="compositionally biased region" description="Gly residues" evidence="2">
    <location>
        <begin position="1"/>
        <end position="29"/>
    </location>
</feature>
<feature type="compositionally biased region" description="Gly residues" evidence="2">
    <location>
        <begin position="142"/>
        <end position="209"/>
    </location>
</feature>
<organism>
    <name type="scientific">Neosartorya fischeri (strain ATCC 1020 / DSM 3700 / CBS 544.65 / FGSC A1164 / JCM 1740 / NRRL 181 / WB 181)</name>
    <name type="common">Aspergillus fischerianus</name>
    <dbReference type="NCBI Taxonomy" id="331117"/>
    <lineage>
        <taxon>Eukaryota</taxon>
        <taxon>Fungi</taxon>
        <taxon>Dikarya</taxon>
        <taxon>Ascomycota</taxon>
        <taxon>Pezizomycotina</taxon>
        <taxon>Eurotiomycetes</taxon>
        <taxon>Eurotiomycetidae</taxon>
        <taxon>Eurotiales</taxon>
        <taxon>Aspergillaceae</taxon>
        <taxon>Aspergillus</taxon>
        <taxon>Aspergillus subgen. Fumigati</taxon>
    </lineage>
</organism>
<gene>
    <name type="primary">gar1</name>
    <name type="ORF">NFIA_102700</name>
</gene>